<organism>
    <name type="scientific">Saccharomyces cerevisiae (strain ATCC 204508 / S288c)</name>
    <name type="common">Baker's yeast</name>
    <dbReference type="NCBI Taxonomy" id="559292"/>
    <lineage>
        <taxon>Eukaryota</taxon>
        <taxon>Fungi</taxon>
        <taxon>Dikarya</taxon>
        <taxon>Ascomycota</taxon>
        <taxon>Saccharomycotina</taxon>
        <taxon>Saccharomycetes</taxon>
        <taxon>Saccharomycetales</taxon>
        <taxon>Saccharomycetaceae</taxon>
        <taxon>Saccharomyces</taxon>
    </lineage>
</organism>
<feature type="chain" id="PRO_0000100390" description="Oxysterol-binding protein homolog 6">
    <location>
        <begin position="1"/>
        <end position="448"/>
    </location>
</feature>
<feature type="region of interest" description="Disordered" evidence="1">
    <location>
        <begin position="1"/>
        <end position="42"/>
    </location>
</feature>
<feature type="region of interest" description="OSBP-related domain (ORD)" evidence="10">
    <location>
        <begin position="54"/>
        <end position="391"/>
    </location>
</feature>
<feature type="compositionally biased region" description="Low complexity" evidence="1">
    <location>
        <begin position="17"/>
        <end position="28"/>
    </location>
</feature>
<feature type="binding site" evidence="8 13">
    <location>
        <begin position="64"/>
        <end position="69"/>
    </location>
    <ligand>
        <name>a 1,2-diacyl-sn-glycero-3-phospho-(1D-myo-inositol 4-phosphate)</name>
        <dbReference type="ChEBI" id="CHEBI:58178"/>
    </ligand>
</feature>
<feature type="binding site" evidence="7 12">
    <location>
        <begin position="64"/>
        <end position="69"/>
    </location>
    <ligand>
        <name>a 1,2-diacyl-sn-glycero-3-phospho-L-serine</name>
        <dbReference type="ChEBI" id="CHEBI:57262"/>
    </ligand>
</feature>
<feature type="binding site" evidence="8 13">
    <location>
        <begin position="126"/>
        <end position="129"/>
    </location>
    <ligand>
        <name>a 1,2-diacyl-sn-glycero-3-phospho-(1D-myo-inositol 4-phosphate)</name>
        <dbReference type="ChEBI" id="CHEBI:58178"/>
    </ligand>
</feature>
<feature type="binding site" evidence="7 12">
    <location>
        <position position="129"/>
    </location>
    <ligand>
        <name>a 1,2-diacyl-sn-glycero-3-phospho-L-serine</name>
        <dbReference type="ChEBI" id="CHEBI:57262"/>
    </ligand>
</feature>
<feature type="binding site" evidence="8 13">
    <location>
        <begin position="157"/>
        <end position="158"/>
    </location>
    <ligand>
        <name>a 1,2-diacyl-sn-glycero-3-phospho-(1D-myo-inositol 4-phosphate)</name>
        <dbReference type="ChEBI" id="CHEBI:58178"/>
    </ligand>
</feature>
<feature type="binding site" evidence="7 12">
    <location>
        <position position="183"/>
    </location>
    <ligand>
        <name>a 1,2-diacyl-sn-glycero-3-phospho-L-serine</name>
        <dbReference type="ChEBI" id="CHEBI:57262"/>
    </ligand>
</feature>
<feature type="binding site" evidence="8 13">
    <location>
        <position position="351"/>
    </location>
    <ligand>
        <name>a 1,2-diacyl-sn-glycero-3-phospho-(1D-myo-inositol 4-phosphate)</name>
        <dbReference type="ChEBI" id="CHEBI:58178"/>
    </ligand>
</feature>
<feature type="binding site" evidence="8 13">
    <location>
        <position position="355"/>
    </location>
    <ligand>
        <name>a 1,2-diacyl-sn-glycero-3-phospho-(1D-myo-inositol 4-phosphate)</name>
        <dbReference type="ChEBI" id="CHEBI:58178"/>
    </ligand>
</feature>
<feature type="binding site" evidence="8 13">
    <location>
        <position position="359"/>
    </location>
    <ligand>
        <name>a 1,2-diacyl-sn-glycero-3-phospho-(1D-myo-inositol 4-phosphate)</name>
        <dbReference type="ChEBI" id="CHEBI:58178"/>
    </ligand>
</feature>
<feature type="modified residue" description="Phosphoserine" evidence="14">
    <location>
        <position position="16"/>
    </location>
</feature>
<feature type="mutagenesis site" description="Strongly reduced binding to phosphatidylserine." evidence="7">
    <original>L</original>
    <variation>A</variation>
    <variation>D</variation>
    <location>
        <position position="69"/>
    </location>
</feature>
<feature type="mutagenesis site" description="Strongly reduced binding to phosphatidylserine and phosphatidylinositol 4-phosphate (PI4P)." evidence="8">
    <original>L</original>
    <variation>D</variation>
    <location>
        <position position="69"/>
    </location>
</feature>
<feature type="mutagenesis site" description="Does not affect binding to phosphatidylserine." evidence="7">
    <original>L</original>
    <variation>F</variation>
    <location>
        <position position="69"/>
    </location>
</feature>
<feature type="mutagenesis site" description="Abolished binding to phosphatidylserine." evidence="7">
    <original>T</original>
    <variation>P</variation>
    <location>
        <position position="71"/>
    </location>
</feature>
<feature type="mutagenesis site" description="Strongly reduced binding to phosphatidylserine." evidence="7">
    <original>I</original>
    <variation>D</variation>
    <location>
        <position position="73"/>
    </location>
</feature>
<feature type="mutagenesis site" description="Strongly reduced binding to phosphatidylserine." evidence="7">
    <original>K</original>
    <variation>A</variation>
    <location>
        <position position="126"/>
    </location>
</feature>
<feature type="mutagenesis site" description="Strongly reduced binding to phosphatidylserine." evidence="7">
    <original>N</original>
    <variation>A</variation>
    <location>
        <position position="129"/>
    </location>
</feature>
<feature type="mutagenesis site" description="Strongly reduced binding to phosphatidylinositol 4-phosphate (PI4P). Does not affect binding to phosphatidylserine." evidence="8">
    <original>HH</original>
    <variation>AA</variation>
    <location>
        <begin position="157"/>
        <end position="158"/>
    </location>
</feature>
<feature type="mutagenesis site" description="Does not affect binding to phosphatidylserine." evidence="7">
    <original>H</original>
    <variation>A</variation>
    <location>
        <position position="157"/>
    </location>
</feature>
<feature type="mutagenesis site" description="Does not affect binding to phosphatidylserine." evidence="7">
    <original>H</original>
    <variation>A</variation>
    <location>
        <position position="158"/>
    </location>
</feature>
<feature type="mutagenesis site" description="Does not affect binding to phosphatidylserine." evidence="7">
    <original>K</original>
    <variation>A</variation>
    <location>
        <position position="182"/>
    </location>
</feature>
<feature type="mutagenesis site" description="Does not affect binding to phosphatidylserine." evidence="7">
    <original>K</original>
    <variation>A</variation>
    <location>
        <position position="351"/>
    </location>
</feature>
<feature type="mutagenesis site" description="Strongly reduced binding to phosphatidylinositol 4-phosphate (PI4P). Does not affect binding to phosphatidylserine." evidence="8">
    <original>K</original>
    <variation>E</variation>
    <location>
        <position position="351"/>
    </location>
</feature>
<feature type="helix" evidence="15">
    <location>
        <begin position="37"/>
        <end position="39"/>
    </location>
</feature>
<feature type="helix" evidence="15">
    <location>
        <begin position="45"/>
        <end position="55"/>
    </location>
</feature>
<feature type="helix" evidence="15">
    <location>
        <begin position="71"/>
        <end position="73"/>
    </location>
</feature>
<feature type="strand" evidence="15">
    <location>
        <begin position="74"/>
        <end position="78"/>
    </location>
</feature>
<feature type="helix" evidence="15">
    <location>
        <begin position="79"/>
        <end position="85"/>
    </location>
</feature>
<feature type="helix" evidence="15">
    <location>
        <begin position="90"/>
        <end position="98"/>
    </location>
</feature>
<feature type="helix" evidence="15">
    <location>
        <begin position="102"/>
        <end position="115"/>
    </location>
</feature>
<feature type="turn" evidence="15">
    <location>
        <begin position="116"/>
        <end position="118"/>
    </location>
</feature>
<feature type="strand" evidence="15">
    <location>
        <begin position="122"/>
        <end position="124"/>
    </location>
</feature>
<feature type="strand" evidence="15">
    <location>
        <begin position="126"/>
        <end position="128"/>
    </location>
</feature>
<feature type="strand" evidence="15">
    <location>
        <begin position="135"/>
        <end position="141"/>
    </location>
</feature>
<feature type="strand" evidence="15">
    <location>
        <begin position="147"/>
        <end position="156"/>
    </location>
</feature>
<feature type="turn" evidence="15">
    <location>
        <begin position="157"/>
        <end position="160"/>
    </location>
</feature>
<feature type="strand" evidence="15">
    <location>
        <begin position="161"/>
        <end position="168"/>
    </location>
</feature>
<feature type="helix" evidence="15">
    <location>
        <begin position="169"/>
        <end position="171"/>
    </location>
</feature>
<feature type="strand" evidence="15">
    <location>
        <begin position="173"/>
        <end position="179"/>
    </location>
</feature>
<feature type="strand" evidence="15">
    <location>
        <begin position="181"/>
        <end position="185"/>
    </location>
</feature>
<feature type="strand" evidence="15">
    <location>
        <begin position="187"/>
        <end position="194"/>
    </location>
</feature>
<feature type="strand" evidence="15">
    <location>
        <begin position="197"/>
        <end position="206"/>
    </location>
</feature>
<feature type="strand" evidence="15">
    <location>
        <begin position="210"/>
        <end position="218"/>
    </location>
</feature>
<feature type="strand" evidence="15">
    <location>
        <begin position="222"/>
        <end position="225"/>
    </location>
</feature>
<feature type="strand" evidence="15">
    <location>
        <begin position="227"/>
        <end position="230"/>
    </location>
</feature>
<feature type="strand" evidence="15">
    <location>
        <begin position="233"/>
        <end position="236"/>
    </location>
</feature>
<feature type="strand" evidence="15">
    <location>
        <begin position="238"/>
        <end position="243"/>
    </location>
</feature>
<feature type="strand" evidence="15">
    <location>
        <begin position="248"/>
        <end position="253"/>
    </location>
</feature>
<feature type="strand" evidence="15">
    <location>
        <begin position="258"/>
        <end position="260"/>
    </location>
</feature>
<feature type="strand" evidence="15">
    <location>
        <begin position="263"/>
        <end position="271"/>
    </location>
</feature>
<feature type="strand" evidence="15">
    <location>
        <begin position="277"/>
        <end position="284"/>
    </location>
</feature>
<feature type="strand" evidence="15">
    <location>
        <begin position="287"/>
        <end position="293"/>
    </location>
</feature>
<feature type="strand" evidence="15">
    <location>
        <begin position="302"/>
        <end position="306"/>
    </location>
</feature>
<feature type="turn" evidence="15">
    <location>
        <begin position="307"/>
        <end position="309"/>
    </location>
</feature>
<feature type="helix" evidence="15">
    <location>
        <begin position="320"/>
        <end position="322"/>
    </location>
</feature>
<feature type="helix" evidence="15">
    <location>
        <begin position="328"/>
        <end position="331"/>
    </location>
</feature>
<feature type="helix" evidence="15">
    <location>
        <begin position="333"/>
        <end position="340"/>
    </location>
</feature>
<feature type="helix" evidence="15">
    <location>
        <begin position="344"/>
        <end position="367"/>
    </location>
</feature>
<feature type="strand" evidence="15">
    <location>
        <begin position="375"/>
        <end position="379"/>
    </location>
</feature>
<feature type="strand" evidence="15">
    <location>
        <begin position="387"/>
        <end position="392"/>
    </location>
</feature>
<feature type="helix" evidence="15">
    <location>
        <begin position="400"/>
        <end position="410"/>
    </location>
</feature>
<feature type="helix" evidence="15">
    <location>
        <begin position="421"/>
        <end position="424"/>
    </location>
</feature>
<feature type="helix" evidence="15">
    <location>
        <begin position="427"/>
        <end position="433"/>
    </location>
</feature>
<feature type="helix" evidence="16">
    <location>
        <begin position="436"/>
        <end position="440"/>
    </location>
</feature>
<name>OSH6_YEAST</name>
<accession>Q02201</accession>
<accession>D6VXT9</accession>
<protein>
    <recommendedName>
        <fullName evidence="9">Oxysterol-binding protein homolog 6</fullName>
    </recommendedName>
    <alternativeName>
        <fullName>Lipid-transfer protein Osh6</fullName>
        <shortName>LTP</shortName>
    </alternativeName>
    <alternativeName>
        <fullName>Oxysterol-binding phosphatidylserine transferase</fullName>
    </alternativeName>
    <alternativeName>
        <fullName>Oxysterol-binding protein-related protein 6</fullName>
        <shortName>ORP 6</shortName>
        <shortName>OSBP-related protein 6</shortName>
    </alternativeName>
</protein>
<proteinExistence type="evidence at protein level"/>
<dbReference type="EMBL" id="X65124">
    <property type="protein sequence ID" value="CAA46249.1"/>
    <property type="molecule type" value="Genomic_DNA"/>
</dbReference>
<dbReference type="EMBL" id="Z28228">
    <property type="protein sequence ID" value="CAA82073.1"/>
    <property type="molecule type" value="Genomic_DNA"/>
</dbReference>
<dbReference type="EMBL" id="BK006944">
    <property type="protein sequence ID" value="DAA09159.1"/>
    <property type="molecule type" value="Genomic_DNA"/>
</dbReference>
<dbReference type="PIR" id="S25324">
    <property type="entry name" value="S25324"/>
</dbReference>
<dbReference type="RefSeq" id="NP_012928.1">
    <property type="nucleotide sequence ID" value="NM_001179793.1"/>
</dbReference>
<dbReference type="PDB" id="4B2Z">
    <property type="method" value="X-ray"/>
    <property type="resolution" value="1.95 A"/>
    <property type="chains" value="A/B=1-448"/>
</dbReference>
<dbReference type="PDB" id="4PH7">
    <property type="method" value="X-ray"/>
    <property type="resolution" value="2.55 A"/>
    <property type="chains" value="A/B/C/D=1-448"/>
</dbReference>
<dbReference type="PDBsum" id="4B2Z"/>
<dbReference type="PDBsum" id="4PH7"/>
<dbReference type="SMR" id="Q02201"/>
<dbReference type="BioGRID" id="34135">
    <property type="interactions" value="98"/>
</dbReference>
<dbReference type="FunCoup" id="Q02201">
    <property type="interactions" value="1539"/>
</dbReference>
<dbReference type="IntAct" id="Q02201">
    <property type="interactions" value="25"/>
</dbReference>
<dbReference type="MINT" id="Q02201"/>
<dbReference type="STRING" id="4932.YKR003W"/>
<dbReference type="SwissLipids" id="SLP:000000525"/>
<dbReference type="TCDB" id="2.D.1.1.3">
    <property type="family name" value="the pi4p/ps counter transporter (p/p-ct) family"/>
</dbReference>
<dbReference type="iPTMnet" id="Q02201"/>
<dbReference type="PaxDb" id="4932-YKR003W"/>
<dbReference type="PeptideAtlas" id="Q02201"/>
<dbReference type="EnsemblFungi" id="YKR003W_mRNA">
    <property type="protein sequence ID" value="YKR003W"/>
    <property type="gene ID" value="YKR003W"/>
</dbReference>
<dbReference type="GeneID" id="853872"/>
<dbReference type="KEGG" id="sce:YKR003W"/>
<dbReference type="AGR" id="SGD:S000001711"/>
<dbReference type="SGD" id="S000001711">
    <property type="gene designation" value="OSH6"/>
</dbReference>
<dbReference type="VEuPathDB" id="FungiDB:YKR003W"/>
<dbReference type="eggNOG" id="KOG2210">
    <property type="taxonomic scope" value="Eukaryota"/>
</dbReference>
<dbReference type="GeneTree" id="ENSGT00940000154690"/>
<dbReference type="HOGENOM" id="CLU_012334_4_2_1"/>
<dbReference type="InParanoid" id="Q02201"/>
<dbReference type="OMA" id="RYDYPNG"/>
<dbReference type="OrthoDB" id="14833at2759"/>
<dbReference type="BioCyc" id="YEAST:G3O-31981-MONOMER"/>
<dbReference type="Reactome" id="R-SCE-1482801">
    <property type="pathway name" value="Acyl chain remodelling of PS"/>
</dbReference>
<dbReference type="BioGRID-ORCS" id="853872">
    <property type="hits" value="0 hits in 10 CRISPR screens"/>
</dbReference>
<dbReference type="EvolutionaryTrace" id="Q02201"/>
<dbReference type="PRO" id="PR:Q02201"/>
<dbReference type="Proteomes" id="UP000002311">
    <property type="component" value="Chromosome XI"/>
</dbReference>
<dbReference type="RNAct" id="Q02201">
    <property type="molecule type" value="protein"/>
</dbReference>
<dbReference type="GO" id="GO:0032541">
    <property type="term" value="C:cortical endoplasmic reticulum"/>
    <property type="evidence" value="ECO:0000314"/>
    <property type="project" value="UniProtKB"/>
</dbReference>
<dbReference type="GO" id="GO:0005737">
    <property type="term" value="C:cytoplasm"/>
    <property type="evidence" value="ECO:0000314"/>
    <property type="project" value="SGD"/>
</dbReference>
<dbReference type="GO" id="GO:0005829">
    <property type="term" value="C:cytosol"/>
    <property type="evidence" value="ECO:0000318"/>
    <property type="project" value="GO_Central"/>
</dbReference>
<dbReference type="GO" id="GO:0005789">
    <property type="term" value="C:endoplasmic reticulum membrane"/>
    <property type="evidence" value="ECO:0007669"/>
    <property type="project" value="UniProtKB-SubCell"/>
</dbReference>
<dbReference type="GO" id="GO:0016020">
    <property type="term" value="C:membrane"/>
    <property type="evidence" value="ECO:0000318"/>
    <property type="project" value="GO_Central"/>
</dbReference>
<dbReference type="GO" id="GO:0005886">
    <property type="term" value="C:plasma membrane"/>
    <property type="evidence" value="ECO:0007669"/>
    <property type="project" value="UniProtKB-SubCell"/>
</dbReference>
<dbReference type="GO" id="GO:0008289">
    <property type="term" value="F:lipid binding"/>
    <property type="evidence" value="ECO:0000314"/>
    <property type="project" value="SGD"/>
</dbReference>
<dbReference type="GO" id="GO:0070300">
    <property type="term" value="F:phosphatidic acid binding"/>
    <property type="evidence" value="ECO:0000314"/>
    <property type="project" value="SGD"/>
</dbReference>
<dbReference type="GO" id="GO:0043325">
    <property type="term" value="F:phosphatidylinositol-3,4-bisphosphate binding"/>
    <property type="evidence" value="ECO:0000314"/>
    <property type="project" value="SGD"/>
</dbReference>
<dbReference type="GO" id="GO:0080025">
    <property type="term" value="F:phosphatidylinositol-3,5-bisphosphate binding"/>
    <property type="evidence" value="ECO:0000314"/>
    <property type="project" value="SGD"/>
</dbReference>
<dbReference type="GO" id="GO:0070273">
    <property type="term" value="F:phosphatidylinositol-4-phosphate binding"/>
    <property type="evidence" value="ECO:0000314"/>
    <property type="project" value="UniProtKB"/>
</dbReference>
<dbReference type="GO" id="GO:0010314">
    <property type="term" value="F:phosphatidylinositol-5-phosphate binding"/>
    <property type="evidence" value="ECO:0000314"/>
    <property type="project" value="SGD"/>
</dbReference>
<dbReference type="GO" id="GO:0001786">
    <property type="term" value="F:phosphatidylserine binding"/>
    <property type="evidence" value="ECO:0000314"/>
    <property type="project" value="UniProtKB"/>
</dbReference>
<dbReference type="GO" id="GO:0005548">
    <property type="term" value="F:phospholipid transporter activity"/>
    <property type="evidence" value="ECO:0000314"/>
    <property type="project" value="UniProtKB"/>
</dbReference>
<dbReference type="GO" id="GO:0032934">
    <property type="term" value="F:sterol binding"/>
    <property type="evidence" value="ECO:0000318"/>
    <property type="project" value="GO_Central"/>
</dbReference>
<dbReference type="GO" id="GO:0120015">
    <property type="term" value="F:sterol transfer activity"/>
    <property type="evidence" value="ECO:0000314"/>
    <property type="project" value="SGD"/>
</dbReference>
<dbReference type="GO" id="GO:0006897">
    <property type="term" value="P:endocytosis"/>
    <property type="evidence" value="ECO:0000316"/>
    <property type="project" value="SGD"/>
</dbReference>
<dbReference type="GO" id="GO:0006887">
    <property type="term" value="P:exocytosis"/>
    <property type="evidence" value="ECO:0000316"/>
    <property type="project" value="SGD"/>
</dbReference>
<dbReference type="GO" id="GO:0030011">
    <property type="term" value="P:maintenance of cell polarity"/>
    <property type="evidence" value="ECO:0000316"/>
    <property type="project" value="SGD"/>
</dbReference>
<dbReference type="GO" id="GO:0015914">
    <property type="term" value="P:phospholipid transport"/>
    <property type="evidence" value="ECO:0000314"/>
    <property type="project" value="UniProtKB"/>
</dbReference>
<dbReference type="GO" id="GO:0034727">
    <property type="term" value="P:piecemeal microautophagy of the nucleus"/>
    <property type="evidence" value="ECO:0000316"/>
    <property type="project" value="SGD"/>
</dbReference>
<dbReference type="GO" id="GO:0055092">
    <property type="term" value="P:sterol homeostasis"/>
    <property type="evidence" value="ECO:0000315"/>
    <property type="project" value="SGD"/>
</dbReference>
<dbReference type="GO" id="GO:0016125">
    <property type="term" value="P:sterol metabolic process"/>
    <property type="evidence" value="ECO:0000316"/>
    <property type="project" value="SGD"/>
</dbReference>
<dbReference type="GO" id="GO:0015918">
    <property type="term" value="P:sterol transport"/>
    <property type="evidence" value="ECO:0000316"/>
    <property type="project" value="SGD"/>
</dbReference>
<dbReference type="FunFam" id="3.30.70.3490:FF:000014">
    <property type="entry name" value="OSH7p Oxysterol-binding protein"/>
    <property type="match status" value="1"/>
</dbReference>
<dbReference type="FunFam" id="2.40.160.120:FF:000007">
    <property type="entry name" value="Oxysterol binding protein"/>
    <property type="match status" value="1"/>
</dbReference>
<dbReference type="FunFam" id="1.10.287.2720:FF:000001">
    <property type="entry name" value="Oxysterol-binding OBPalpha"/>
    <property type="match status" value="1"/>
</dbReference>
<dbReference type="Gene3D" id="1.10.287.2720">
    <property type="match status" value="1"/>
</dbReference>
<dbReference type="Gene3D" id="2.40.160.120">
    <property type="match status" value="1"/>
</dbReference>
<dbReference type="Gene3D" id="3.30.70.3490">
    <property type="match status" value="1"/>
</dbReference>
<dbReference type="InterPro" id="IPR037239">
    <property type="entry name" value="OSBP_sf"/>
</dbReference>
<dbReference type="InterPro" id="IPR000648">
    <property type="entry name" value="Oxysterol-bd"/>
</dbReference>
<dbReference type="InterPro" id="IPR018494">
    <property type="entry name" value="Oxysterol-bd_CS"/>
</dbReference>
<dbReference type="PANTHER" id="PTHR10972:SF102">
    <property type="entry name" value="OXYSTEROL-BINDING PROTEIN"/>
    <property type="match status" value="1"/>
</dbReference>
<dbReference type="PANTHER" id="PTHR10972">
    <property type="entry name" value="OXYSTEROL-BINDING PROTEIN-RELATED"/>
    <property type="match status" value="1"/>
</dbReference>
<dbReference type="Pfam" id="PF01237">
    <property type="entry name" value="Oxysterol_BP"/>
    <property type="match status" value="1"/>
</dbReference>
<dbReference type="SUPFAM" id="SSF144000">
    <property type="entry name" value="Oxysterol-binding protein-like"/>
    <property type="match status" value="1"/>
</dbReference>
<dbReference type="PROSITE" id="PS01013">
    <property type="entry name" value="OSBP"/>
    <property type="match status" value="1"/>
</dbReference>
<sequence length="448" mass="51588">MGSKKLTVGSDSHRLSKSSFSSNKSSHSATKDQPIDTDDIDEDDESGHNIILNIISQLRPGCDLTRITLPTFILEKKSMLERVTNQLQFPEFLLQAHSEKDPLKRFLYVMKWYLAGWHIAPKAVKKPLNPVLGEYFTAYWDLPNKQQAYYISEQTSHHPPECAYFYMIPESSIRVDGVVIPKSRFLGNSSAAMMDGSTVLQFLDIKDGNGKPEKYVLTQPNVYVRGILFGKMRIELGDHMIIKSPNFQADIEFKTKGYVFGTYDAIEGTVKDYDGNAYYEISGKWNDVMYLKDLKQPRSSPKVFLDTHKESPLRPKVRPLSEQGEYESRKLWKKVTDALAVRNHPVATEEKFQIEDHQRQLAKKRIEDGVEFHPKLFRRSKPGEDLDYCIYKNIPVDEDPEKQIRSILQIAPILPGQQFTDKFFIPAFEKIKSQKKMIENEKQNPAKQ</sequence>
<keyword id="KW-0002">3D-structure</keyword>
<keyword id="KW-1003">Cell membrane</keyword>
<keyword id="KW-0963">Cytoplasm</keyword>
<keyword id="KW-0256">Endoplasmic reticulum</keyword>
<keyword id="KW-0445">Lipid transport</keyword>
<keyword id="KW-0446">Lipid-binding</keyword>
<keyword id="KW-0472">Membrane</keyword>
<keyword id="KW-0597">Phosphoprotein</keyword>
<keyword id="KW-1185">Reference proteome</keyword>
<keyword id="KW-0813">Transport</keyword>
<comment type="function">
    <text evidence="3 5 7 8">Lipid transport protein (LTP) involved in non-vesicular transfer of lipids between membranes. Functions in phosphoinositide-coupled directional transport of various lipids by carrying the lipid molecule in a hydrophobic pocket and transferring it between membranes through the cytosol. Involved in maintenance of intracellular sterol distribution and homeostasis (PubMed:15173322, PubMed:16156791, PubMed:23934110, PubMed:26206936). Catalyzes the lipid countertransport between the endoplasmic reticulum (ER) and the plasma membrane (PM). Specifically exchanges phosphatidylserine (PS) with phosphatidylinositol 4-phosphate (PI4P), delivering phosphatidylserine to the PM in exchange for PI4P, which is delivered to the ER-localized PI4P phosphatase SAC1 for degradation. Thus, by maintaining a PI4P gradient at the ER/PM interface, SAC1 drives PS transport (PubMed:23934110, PubMed:26206936). Binds phosphatidylserine and PI4P in a mutually exclusive manner (PubMed:26206936). Also binds phosphatidic acid (PA) (PubMed:16156791).</text>
</comment>
<comment type="catalytic activity">
    <reaction evidence="7">
        <text>a 1,2-diacyl-sn-glycero-3-phospho-L-serine(in) = a 1,2-diacyl-sn-glycero-3-phospho-L-serine(out)</text>
        <dbReference type="Rhea" id="RHEA:38663"/>
        <dbReference type="ChEBI" id="CHEBI:57262"/>
    </reaction>
    <physiologicalReaction direction="left-to-right" evidence="7">
        <dbReference type="Rhea" id="RHEA:38664"/>
    </physiologicalReaction>
</comment>
<comment type="subunit">
    <text evidence="4">Interacts with the AAA ATPase VPS4; regulates OSH6 membrane association. VPS4 is required for membrane dissociation of OSH6.</text>
</comment>
<comment type="subcellular location">
    <subcellularLocation>
        <location evidence="4 5">Cytoplasm</location>
    </subcellularLocation>
    <subcellularLocation>
        <location evidence="5 6">Cell membrane</location>
    </subcellularLocation>
    <subcellularLocation>
        <location evidence="6 7">Endoplasmic reticulum membrane</location>
    </subcellularLocation>
    <text evidence="6 7">Localizes to the cortical endoplasmic reticulum at the endoplasmic reticulum-plasma membrane contact sites.</text>
</comment>
<comment type="domain">
    <text evidence="11">The OSBP-related domain (ORD) mediates binding of sterols and phospholipids. It displays an incomplete beta-barrel containing a central hydrophobic tunnel that can accommodate a single lipid molecule with a flexible lid covering the tunnel entrance. The ORD can bind two membranes simultaneously. It has at least two membrane-binding surfaces; one near the mouth of the lipid-binding pocket and a distal site that can bind a second membrane. These structural features correlate with the phosphatidylinositol 4-phosphate (PI(4)P)-coupled lipid transport optimized in closely apposed membranes, such as organelle contact sites. The lipid transfer cycle starts from the association of the LTP with a donor membrane, which accompanies conformational changes that uncover the ligand-binding pocket. The tunnel opening is generally mediated by displacement of the lid covering the binding pocket allowing uptake or release of a lipid molecule. The LTPs extract the lipid from the membrane by providing a hydrophobic environment as well as specific interaction. Dissociation from the donor membrane shifts the conformation to a closed form. Then, the LTPs loaded with a cargo lipid diffuse through the aqueous phase. Lid opening may be induced by the interaction of a hydrophobic side of the lid with the target membranes.</text>
</comment>
<comment type="miscellaneous">
    <text evidence="2">Present with 2550 molecules/cell in log phase SD medium.</text>
</comment>
<comment type="similarity">
    <text evidence="10">Belongs to the OSBP family.</text>
</comment>
<gene>
    <name evidence="9" type="primary">OSH6</name>
    <name type="ordered locus">YKR003W</name>
    <name type="ORF">YK102</name>
</gene>
<evidence type="ECO:0000256" key="1">
    <source>
        <dbReference type="SAM" id="MobiDB-lite"/>
    </source>
</evidence>
<evidence type="ECO:0000269" key="2">
    <source>
    </source>
</evidence>
<evidence type="ECO:0000269" key="3">
    <source>
    </source>
</evidence>
<evidence type="ECO:0000269" key="4">
    <source>
    </source>
</evidence>
<evidence type="ECO:0000269" key="5">
    <source>
    </source>
</evidence>
<evidence type="ECO:0000269" key="6">
    <source>
    </source>
</evidence>
<evidence type="ECO:0000269" key="7">
    <source>
    </source>
</evidence>
<evidence type="ECO:0000269" key="8">
    <source>
    </source>
</evidence>
<evidence type="ECO:0000303" key="9">
    <source>
    </source>
</evidence>
<evidence type="ECO:0000305" key="10"/>
<evidence type="ECO:0000305" key="11">
    <source>
    </source>
</evidence>
<evidence type="ECO:0007744" key="12">
    <source>
        <dbReference type="PDB" id="4B2Z"/>
    </source>
</evidence>
<evidence type="ECO:0007744" key="13">
    <source>
        <dbReference type="PDB" id="4PH7"/>
    </source>
</evidence>
<evidence type="ECO:0007744" key="14">
    <source>
    </source>
</evidence>
<evidence type="ECO:0007829" key="15">
    <source>
        <dbReference type="PDB" id="4B2Z"/>
    </source>
</evidence>
<evidence type="ECO:0007829" key="16">
    <source>
        <dbReference type="PDB" id="4PH7"/>
    </source>
</evidence>
<reference key="1">
    <citation type="journal article" date="1992" name="Yeast">
        <title>DNA sequencing and analysis of a 24.7 kb segment encompassing centromere CEN11 of Saccharomyces cerevisiae reveals nine previously unknown open reading frames.</title>
        <authorList>
            <person name="Duesterhoeft A."/>
            <person name="Philippsen P."/>
        </authorList>
    </citation>
    <scope>NUCLEOTIDE SEQUENCE [GENOMIC DNA]</scope>
    <source>
        <strain>ATCC 204508 / S288c</strain>
    </source>
</reference>
<reference key="2">
    <citation type="journal article" date="1994" name="Nature">
        <title>Complete DNA sequence of yeast chromosome XI.</title>
        <authorList>
            <person name="Dujon B."/>
            <person name="Alexandraki D."/>
            <person name="Andre B."/>
            <person name="Ansorge W."/>
            <person name="Baladron V."/>
            <person name="Ballesta J.P.G."/>
            <person name="Banrevi A."/>
            <person name="Bolle P.-A."/>
            <person name="Bolotin-Fukuhara M."/>
            <person name="Bossier P."/>
            <person name="Bou G."/>
            <person name="Boyer J."/>
            <person name="Buitrago M.J."/>
            <person name="Cheret G."/>
            <person name="Colleaux L."/>
            <person name="Daignan-Fornier B."/>
            <person name="del Rey F."/>
            <person name="Dion C."/>
            <person name="Domdey H."/>
            <person name="Duesterhoeft A."/>
            <person name="Duesterhus S."/>
            <person name="Entian K.-D."/>
            <person name="Erfle H."/>
            <person name="Esteban P.F."/>
            <person name="Feldmann H."/>
            <person name="Fernandes L."/>
            <person name="Fobo G.M."/>
            <person name="Fritz C."/>
            <person name="Fukuhara H."/>
            <person name="Gabel C."/>
            <person name="Gaillon L."/>
            <person name="Garcia-Cantalejo J.M."/>
            <person name="Garcia-Ramirez J.J."/>
            <person name="Gent M.E."/>
            <person name="Ghazvini M."/>
            <person name="Goffeau A."/>
            <person name="Gonzalez A."/>
            <person name="Grothues D."/>
            <person name="Guerreiro P."/>
            <person name="Hegemann J.H."/>
            <person name="Hewitt N."/>
            <person name="Hilger F."/>
            <person name="Hollenberg C.P."/>
            <person name="Horaitis O."/>
            <person name="Indge K.J."/>
            <person name="Jacquier A."/>
            <person name="James C.M."/>
            <person name="Jauniaux J.-C."/>
            <person name="Jimenez A."/>
            <person name="Keuchel H."/>
            <person name="Kirchrath L."/>
            <person name="Kleine K."/>
            <person name="Koetter P."/>
            <person name="Legrain P."/>
            <person name="Liebl S."/>
            <person name="Louis E.J."/>
            <person name="Maia e Silva A."/>
            <person name="Marck C."/>
            <person name="Monnier A.-L."/>
            <person name="Moestl D."/>
            <person name="Mueller S."/>
            <person name="Obermaier B."/>
            <person name="Oliver S.G."/>
            <person name="Pallier C."/>
            <person name="Pascolo S."/>
            <person name="Pfeiffer F."/>
            <person name="Philippsen P."/>
            <person name="Planta R.J."/>
            <person name="Pohl F.M."/>
            <person name="Pohl T.M."/>
            <person name="Poehlmann R."/>
            <person name="Portetelle D."/>
            <person name="Purnelle B."/>
            <person name="Puzos V."/>
            <person name="Ramezani Rad M."/>
            <person name="Rasmussen S.W."/>
            <person name="Remacha M.A."/>
            <person name="Revuelta J.L."/>
            <person name="Richard G.-F."/>
            <person name="Rieger M."/>
            <person name="Rodrigues-Pousada C."/>
            <person name="Rose M."/>
            <person name="Rupp T."/>
            <person name="Santos M.A."/>
            <person name="Schwager C."/>
            <person name="Sensen C."/>
            <person name="Skala J."/>
            <person name="Soares H."/>
            <person name="Sor F."/>
            <person name="Stegemann J."/>
            <person name="Tettelin H."/>
            <person name="Thierry A."/>
            <person name="Tzermia M."/>
            <person name="Urrestarazu L.A."/>
            <person name="van Dyck L."/>
            <person name="van Vliet-Reedijk J.C."/>
            <person name="Valens M."/>
            <person name="Vandenbol M."/>
            <person name="Vilela C."/>
            <person name="Vissers S."/>
            <person name="von Wettstein D."/>
            <person name="Voss H."/>
            <person name="Wiemann S."/>
            <person name="Xu G."/>
            <person name="Zimmermann J."/>
            <person name="Haasemann M."/>
            <person name="Becker I."/>
            <person name="Mewes H.-W."/>
        </authorList>
    </citation>
    <scope>NUCLEOTIDE SEQUENCE [LARGE SCALE GENOMIC DNA]</scope>
    <source>
        <strain>ATCC 204508 / S288c</strain>
    </source>
</reference>
<reference key="3">
    <citation type="journal article" date="2014" name="G3 (Bethesda)">
        <title>The reference genome sequence of Saccharomyces cerevisiae: Then and now.</title>
        <authorList>
            <person name="Engel S.R."/>
            <person name="Dietrich F.S."/>
            <person name="Fisk D.G."/>
            <person name="Binkley G."/>
            <person name="Balakrishnan R."/>
            <person name="Costanzo M.C."/>
            <person name="Dwight S.S."/>
            <person name="Hitz B.C."/>
            <person name="Karra K."/>
            <person name="Nash R.S."/>
            <person name="Weng S."/>
            <person name="Wong E.D."/>
            <person name="Lloyd P."/>
            <person name="Skrzypek M.S."/>
            <person name="Miyasato S.R."/>
            <person name="Simison M."/>
            <person name="Cherry J.M."/>
        </authorList>
    </citation>
    <scope>GENOME REANNOTATION</scope>
    <source>
        <strain>ATCC 204508 / S288c</strain>
    </source>
</reference>
<reference key="4">
    <citation type="journal article" date="2001" name="Genetics">
        <title>Overlapping functions of the yeast oxysterol-binding protein homologues.</title>
        <authorList>
            <person name="Beh C.T."/>
            <person name="Cool L."/>
            <person name="Phillips J."/>
            <person name="Rine J."/>
        </authorList>
    </citation>
    <scope>GENETIC ANALYSIS</scope>
</reference>
<reference key="5">
    <citation type="journal article" date="2003" name="Nature">
        <title>Global analysis of protein expression in yeast.</title>
        <authorList>
            <person name="Ghaemmaghami S."/>
            <person name="Huh W.-K."/>
            <person name="Bower K."/>
            <person name="Howson R.W."/>
            <person name="Belle A."/>
            <person name="Dephoure N."/>
            <person name="O'Shea E.K."/>
            <person name="Weissman J.S."/>
        </authorList>
    </citation>
    <scope>LEVEL OF PROTEIN EXPRESSION [LARGE SCALE ANALYSIS]</scope>
</reference>
<reference key="6">
    <citation type="journal article" date="2004" name="J. Cell Sci.">
        <title>A role for yeast oxysterol-binding protein homologs in endocytosis and in the maintenance of intracellular sterol-lipid distribution.</title>
        <authorList>
            <person name="Beh C.T."/>
            <person name="Rine J."/>
        </authorList>
    </citation>
    <scope>FUNCTION</scope>
</reference>
<reference key="7">
    <citation type="journal article" date="2005" name="EMBO J.">
        <title>AAA ATPases regulate membrane association of yeast oxysterol binding proteins and sterol metabolism.</title>
        <authorList>
            <person name="Wang P."/>
            <person name="Zhang Y."/>
            <person name="Li H."/>
            <person name="Chieu H.K."/>
            <person name="Munn A.L."/>
            <person name="Yang H."/>
        </authorList>
    </citation>
    <scope>SUBCELLULAR LOCATION</scope>
    <scope>INTERACTION WITH VPS4</scope>
</reference>
<reference key="8">
    <citation type="journal article" date="2005" name="FEBS J.">
        <title>Molecular characterization of Osh6p, an oxysterol binding protein homolog in the yeast Saccharomyces cerevisiae.</title>
        <authorList>
            <person name="Wang P."/>
            <person name="Duan W."/>
            <person name="Munn A.L."/>
            <person name="Yang H."/>
        </authorList>
    </citation>
    <scope>FUNCTION</scope>
    <scope>SUBCELLULAR LOCATION</scope>
</reference>
<reference key="9">
    <citation type="journal article" date="2007" name="Proc. Natl. Acad. Sci. U.S.A.">
        <title>Analysis of phosphorylation sites on proteins from Saccharomyces cerevisiae by electron transfer dissociation (ETD) mass spectrometry.</title>
        <authorList>
            <person name="Chi A."/>
            <person name="Huttenhower C."/>
            <person name="Geer L.Y."/>
            <person name="Coon J.J."/>
            <person name="Syka J.E.P."/>
            <person name="Bai D.L."/>
            <person name="Shabanowitz J."/>
            <person name="Burke D.J."/>
            <person name="Troyanskaya O.G."/>
            <person name="Hunt D.F."/>
        </authorList>
    </citation>
    <scope>PHOSPHORYLATION [LARGE SCALE ANALYSIS] AT SER-16</scope>
    <scope>IDENTIFICATION BY MASS SPECTROMETRY [LARGE SCALE ANALYSIS]</scope>
</reference>
<reference key="10">
    <citation type="journal article" date="2009" name="J. Cell Biol.">
        <title>Lipid-regulated sterol transfer between closely apposed membranes by oxysterol-binding protein homologues.</title>
        <authorList>
            <person name="Schulz T.A."/>
            <person name="Choi M.G."/>
            <person name="Raychaudhuri S."/>
            <person name="Mears J.A."/>
            <person name="Ghirlando R."/>
            <person name="Hinshaw J.E."/>
            <person name="Prinz W.A."/>
        </authorList>
    </citation>
    <scope>SUBCELLULAR LOCATION</scope>
</reference>
<reference key="11">
    <citation type="journal article" date="2012" name="Proc. Natl. Acad. Sci. U.S.A.">
        <title>N-terminal acetylome analyses and functional insights of the N-terminal acetyltransferase NatB.</title>
        <authorList>
            <person name="Van Damme P."/>
            <person name="Lasa M."/>
            <person name="Polevoda B."/>
            <person name="Gazquez C."/>
            <person name="Elosegui-Artola A."/>
            <person name="Kim D.S."/>
            <person name="De Juan-Pardo E."/>
            <person name="Demeyer K."/>
            <person name="Hole K."/>
            <person name="Larrea E."/>
            <person name="Timmerman E."/>
            <person name="Prieto J."/>
            <person name="Arnesen T."/>
            <person name="Sherman F."/>
            <person name="Gevaert K."/>
            <person name="Aldabe R."/>
        </authorList>
    </citation>
    <scope>IDENTIFICATION BY MASS SPECTROMETRY [LARGE SCALE ANALYSIS]</scope>
</reference>
<reference key="12">
    <citation type="journal article" date="2013" name="Nature">
        <title>Interactome map uncovers phosphatidylserine transport by oxysterol-binding proteins.</title>
        <authorList>
            <person name="Maeda K."/>
            <person name="Anand K."/>
            <person name="Chiapparino A."/>
            <person name="Kumar A."/>
            <person name="Poletto M."/>
            <person name="Kaksonen M."/>
            <person name="Gavin A.C."/>
        </authorList>
    </citation>
    <scope>X-RAY CRYSTALLOGRAPHY (1.95 ANGSTROMS) IN COMPLEX WITH PHOSPHATIDYLSERINE</scope>
    <scope>FUNCTION</scope>
    <scope>SUBCELLULAR LOCATION</scope>
    <scope>MUTAGENESIS OF LEU-69; THR-71; ILE-73; LYS-126; ASN-129; HIS-157; HIS-158; LYS-182 AND LYS-351</scope>
</reference>
<reference key="13">
    <citation type="journal article" date="2015" name="Science">
        <title>Phosphatidylserine transport by ORP/Osh proteins is driven by phosphatidylinositol 4-phosphate.</title>
        <authorList>
            <person name="Moser von Filseck J."/>
            <person name="Copic A."/>
            <person name="Delfosse V."/>
            <person name="Vanni S."/>
            <person name="Jackson C.L."/>
            <person name="Bourguet W."/>
            <person name="Drin G."/>
        </authorList>
    </citation>
    <scope>X-RAY CRYSTALLOGRAPHY (2.55 ANGSTROMS) IN COMPLEX WITH PHOSPHATIDYLINOSITOL 4-PHOSPHATE</scope>
    <scope>FUNCTION</scope>
    <scope>MUTAGENESIS OF LEU-69; 157-HIS-HIS-158 AND LYS-351</scope>
</reference>